<gene>
    <name type="ordered locus">Sbal_1048</name>
</gene>
<dbReference type="EMBL" id="CP000563">
    <property type="protein sequence ID" value="ABN60572.1"/>
    <property type="molecule type" value="Genomic_DNA"/>
</dbReference>
<dbReference type="RefSeq" id="WP_011846078.1">
    <property type="nucleotide sequence ID" value="NC_009052.1"/>
</dbReference>
<dbReference type="SMR" id="A3D1F9"/>
<dbReference type="STRING" id="325240.Sbal_1048"/>
<dbReference type="KEGG" id="sbl:Sbal_1048"/>
<dbReference type="HOGENOM" id="CLU_061989_0_0_6"/>
<dbReference type="OrthoDB" id="9777133at2"/>
<dbReference type="Proteomes" id="UP000001557">
    <property type="component" value="Chromosome"/>
</dbReference>
<dbReference type="GO" id="GO:0005829">
    <property type="term" value="C:cytosol"/>
    <property type="evidence" value="ECO:0007669"/>
    <property type="project" value="TreeGrafter"/>
</dbReference>
<dbReference type="GO" id="GO:0033194">
    <property type="term" value="P:response to hydroperoxide"/>
    <property type="evidence" value="ECO:0007669"/>
    <property type="project" value="TreeGrafter"/>
</dbReference>
<dbReference type="HAMAP" id="MF_00652">
    <property type="entry name" value="UPF0246"/>
    <property type="match status" value="1"/>
</dbReference>
<dbReference type="InterPro" id="IPR005583">
    <property type="entry name" value="YaaA"/>
</dbReference>
<dbReference type="NCBIfam" id="NF002541">
    <property type="entry name" value="PRK02101.1-1"/>
    <property type="match status" value="1"/>
</dbReference>
<dbReference type="NCBIfam" id="NF002542">
    <property type="entry name" value="PRK02101.1-3"/>
    <property type="match status" value="1"/>
</dbReference>
<dbReference type="PANTHER" id="PTHR30283:SF4">
    <property type="entry name" value="PEROXIDE STRESS RESISTANCE PROTEIN YAAA"/>
    <property type="match status" value="1"/>
</dbReference>
<dbReference type="PANTHER" id="PTHR30283">
    <property type="entry name" value="PEROXIDE STRESS RESPONSE PROTEIN YAAA"/>
    <property type="match status" value="1"/>
</dbReference>
<dbReference type="Pfam" id="PF03883">
    <property type="entry name" value="H2O2_YaaD"/>
    <property type="match status" value="1"/>
</dbReference>
<accession>A3D1F9</accession>
<reference key="1">
    <citation type="submission" date="2007-02" db="EMBL/GenBank/DDBJ databases">
        <title>Complete sequence of chromosome of Shewanella baltica OS155.</title>
        <authorList>
            <consortium name="US DOE Joint Genome Institute"/>
            <person name="Copeland A."/>
            <person name="Lucas S."/>
            <person name="Lapidus A."/>
            <person name="Barry K."/>
            <person name="Detter J.C."/>
            <person name="Glavina del Rio T."/>
            <person name="Hammon N."/>
            <person name="Israni S."/>
            <person name="Dalin E."/>
            <person name="Tice H."/>
            <person name="Pitluck S."/>
            <person name="Sims D.R."/>
            <person name="Brettin T."/>
            <person name="Bruce D."/>
            <person name="Han C."/>
            <person name="Tapia R."/>
            <person name="Brainard J."/>
            <person name="Schmutz J."/>
            <person name="Larimer F."/>
            <person name="Land M."/>
            <person name="Hauser L."/>
            <person name="Kyrpides N."/>
            <person name="Mikhailova N."/>
            <person name="Brettar I."/>
            <person name="Klappenbach J."/>
            <person name="Konstantinidis K."/>
            <person name="Rodrigues J."/>
            <person name="Tiedje J."/>
            <person name="Richardson P."/>
        </authorList>
    </citation>
    <scope>NUCLEOTIDE SEQUENCE [LARGE SCALE GENOMIC DNA]</scope>
    <source>
        <strain>OS155 / ATCC BAA-1091</strain>
    </source>
</reference>
<name>Y1048_SHEB5</name>
<sequence>MLILVSPAKTLDFEQPPLTQVYSQPDFLTHSQELIQVCRQLAPSDIATLMKVSDKIAGLNAARFGEWQPDFSLDNAKQAIFAFRGDVYTGFDADSLSEDEIAQTQSQLRILSGLYGLLRPLDLIMPYRLEMGTALSNPKGKNLYEFWGDTLTQAVNEALAESGSDIIVNLASNEYFKAIKPKKLQGQLISPVFKDCKNGQYKVISFFAKRARGMMARYIITNKVNTLAELKAFNLAGYYYSEEQSSPTNPTFLRAE</sequence>
<comment type="similarity">
    <text evidence="1">Belongs to the UPF0246 family.</text>
</comment>
<organism>
    <name type="scientific">Shewanella baltica (strain OS155 / ATCC BAA-1091)</name>
    <dbReference type="NCBI Taxonomy" id="325240"/>
    <lineage>
        <taxon>Bacteria</taxon>
        <taxon>Pseudomonadati</taxon>
        <taxon>Pseudomonadota</taxon>
        <taxon>Gammaproteobacteria</taxon>
        <taxon>Alteromonadales</taxon>
        <taxon>Shewanellaceae</taxon>
        <taxon>Shewanella</taxon>
    </lineage>
</organism>
<evidence type="ECO:0000255" key="1">
    <source>
        <dbReference type="HAMAP-Rule" id="MF_00652"/>
    </source>
</evidence>
<keyword id="KW-1185">Reference proteome</keyword>
<feature type="chain" id="PRO_1000061633" description="UPF0246 protein Sbal_1048">
    <location>
        <begin position="1"/>
        <end position="256"/>
    </location>
</feature>
<proteinExistence type="inferred from homology"/>
<protein>
    <recommendedName>
        <fullName evidence="1">UPF0246 protein Sbal_1048</fullName>
    </recommendedName>
</protein>